<reference key="1">
    <citation type="journal article" date="2004" name="J. Bacteriol.">
        <title>Complete genome sequence of the genetically tractable hydrogenotrophic methanogen Methanococcus maripaludis.</title>
        <authorList>
            <person name="Hendrickson E.L."/>
            <person name="Kaul R."/>
            <person name="Zhou Y."/>
            <person name="Bovee D."/>
            <person name="Chapman P."/>
            <person name="Chung J."/>
            <person name="Conway de Macario E."/>
            <person name="Dodsworth J.A."/>
            <person name="Gillett W."/>
            <person name="Graham D.E."/>
            <person name="Hackett M."/>
            <person name="Haydock A.K."/>
            <person name="Kang A."/>
            <person name="Land M.L."/>
            <person name="Levy R."/>
            <person name="Lie T.J."/>
            <person name="Major T.A."/>
            <person name="Moore B.C."/>
            <person name="Porat I."/>
            <person name="Palmeiri A."/>
            <person name="Rouse G."/>
            <person name="Saenphimmachak C."/>
            <person name="Soell D."/>
            <person name="Van Dien S."/>
            <person name="Wang T."/>
            <person name="Whitman W.B."/>
            <person name="Xia Q."/>
            <person name="Zhang Y."/>
            <person name="Larimer F.W."/>
            <person name="Olson M.V."/>
            <person name="Leigh J.A."/>
        </authorList>
    </citation>
    <scope>NUCLEOTIDE SEQUENCE [LARGE SCALE GENOMIC DNA]</scope>
    <source>
        <strain>DSM 14266 / JCM 13030 / NBRC 101832 / S2 / LL</strain>
    </source>
</reference>
<keyword id="KW-0145">Chemotaxis</keyword>
<keyword id="KW-0963">Cytoplasm</keyword>
<keyword id="KW-0378">Hydrolase</keyword>
<keyword id="KW-0597">Phosphoprotein</keyword>
<keyword id="KW-1185">Reference proteome</keyword>
<comment type="function">
    <text evidence="1">Involved in chemotaxis. Part of a chemotaxis signal transduction system that modulates chemotaxis in response to various stimuli. Catalyzes the demethylation of specific methylglutamate residues introduced into the chemoreceptors (methyl-accepting chemotaxis proteins or MCP) by CheR. Also mediates the irreversible deamidation of specific glutamine residues to glutamic acid.</text>
</comment>
<comment type="catalytic activity">
    <reaction evidence="1">
        <text>[protein]-L-glutamate 5-O-methyl ester + H2O = L-glutamyl-[protein] + methanol + H(+)</text>
        <dbReference type="Rhea" id="RHEA:23236"/>
        <dbReference type="Rhea" id="RHEA-COMP:10208"/>
        <dbReference type="Rhea" id="RHEA-COMP:10311"/>
        <dbReference type="ChEBI" id="CHEBI:15377"/>
        <dbReference type="ChEBI" id="CHEBI:15378"/>
        <dbReference type="ChEBI" id="CHEBI:17790"/>
        <dbReference type="ChEBI" id="CHEBI:29973"/>
        <dbReference type="ChEBI" id="CHEBI:82795"/>
        <dbReference type="EC" id="3.1.1.61"/>
    </reaction>
</comment>
<comment type="catalytic activity">
    <reaction evidence="1">
        <text>L-glutaminyl-[protein] + H2O = L-glutamyl-[protein] + NH4(+)</text>
        <dbReference type="Rhea" id="RHEA:16441"/>
        <dbReference type="Rhea" id="RHEA-COMP:10207"/>
        <dbReference type="Rhea" id="RHEA-COMP:10208"/>
        <dbReference type="ChEBI" id="CHEBI:15377"/>
        <dbReference type="ChEBI" id="CHEBI:28938"/>
        <dbReference type="ChEBI" id="CHEBI:29973"/>
        <dbReference type="ChEBI" id="CHEBI:30011"/>
        <dbReference type="EC" id="3.5.1.44"/>
    </reaction>
</comment>
<comment type="subcellular location">
    <subcellularLocation>
        <location evidence="1">Cytoplasm</location>
    </subcellularLocation>
</comment>
<comment type="domain">
    <text evidence="1">Contains a C-terminal catalytic domain, and an N-terminal region which modulates catalytic activity.</text>
</comment>
<comment type="PTM">
    <text evidence="1">Phosphorylated by CheA. Phosphorylation of the N-terminal regulatory domain activates the methylesterase activity.</text>
</comment>
<comment type="similarity">
    <text evidence="1">Belongs to the CheB family.</text>
</comment>
<accession>P62647</accession>
<gene>
    <name evidence="1" type="primary">cheB</name>
    <name type="ordered locus">MMP0926</name>
</gene>
<dbReference type="EC" id="3.1.1.61" evidence="1"/>
<dbReference type="EC" id="3.5.1.44" evidence="1"/>
<dbReference type="EMBL" id="BX950229">
    <property type="protein sequence ID" value="CAF30482.1"/>
    <property type="molecule type" value="Genomic_DNA"/>
</dbReference>
<dbReference type="RefSeq" id="WP_011170870.1">
    <property type="nucleotide sequence ID" value="NC_005791.1"/>
</dbReference>
<dbReference type="SMR" id="P62647"/>
<dbReference type="STRING" id="267377.MMP0926"/>
<dbReference type="EnsemblBacteria" id="CAF30482">
    <property type="protein sequence ID" value="CAF30482"/>
    <property type="gene ID" value="MMP0926"/>
</dbReference>
<dbReference type="GeneID" id="2761703"/>
<dbReference type="KEGG" id="mmp:MMP0926"/>
<dbReference type="PATRIC" id="fig|267377.15.peg.954"/>
<dbReference type="eggNOG" id="arCOG02382">
    <property type="taxonomic scope" value="Archaea"/>
</dbReference>
<dbReference type="HOGENOM" id="CLU_000445_51_0_2"/>
<dbReference type="OrthoDB" id="2857at2157"/>
<dbReference type="Proteomes" id="UP000000590">
    <property type="component" value="Chromosome"/>
</dbReference>
<dbReference type="GO" id="GO:0005737">
    <property type="term" value="C:cytoplasm"/>
    <property type="evidence" value="ECO:0007669"/>
    <property type="project" value="UniProtKB-SubCell"/>
</dbReference>
<dbReference type="GO" id="GO:0000156">
    <property type="term" value="F:phosphorelay response regulator activity"/>
    <property type="evidence" value="ECO:0007669"/>
    <property type="project" value="InterPro"/>
</dbReference>
<dbReference type="GO" id="GO:0008984">
    <property type="term" value="F:protein-glutamate methylesterase activity"/>
    <property type="evidence" value="ECO:0007669"/>
    <property type="project" value="UniProtKB-UniRule"/>
</dbReference>
<dbReference type="GO" id="GO:0050568">
    <property type="term" value="F:protein-glutamine glutaminase activity"/>
    <property type="evidence" value="ECO:0007669"/>
    <property type="project" value="UniProtKB-UniRule"/>
</dbReference>
<dbReference type="GO" id="GO:0006935">
    <property type="term" value="P:chemotaxis"/>
    <property type="evidence" value="ECO:0007669"/>
    <property type="project" value="UniProtKB-UniRule"/>
</dbReference>
<dbReference type="CDD" id="cd16432">
    <property type="entry name" value="CheB_Rec"/>
    <property type="match status" value="1"/>
</dbReference>
<dbReference type="CDD" id="cd17541">
    <property type="entry name" value="REC_CheB-like"/>
    <property type="match status" value="1"/>
</dbReference>
<dbReference type="Gene3D" id="3.40.50.2300">
    <property type="match status" value="1"/>
</dbReference>
<dbReference type="Gene3D" id="3.40.50.180">
    <property type="entry name" value="Methylesterase CheB, C-terminal domain"/>
    <property type="match status" value="1"/>
</dbReference>
<dbReference type="HAMAP" id="MF_00099">
    <property type="entry name" value="CheB_chemtxs"/>
    <property type="match status" value="1"/>
</dbReference>
<dbReference type="InterPro" id="IPR008248">
    <property type="entry name" value="CheB-like"/>
</dbReference>
<dbReference type="InterPro" id="IPR035909">
    <property type="entry name" value="CheB_C"/>
</dbReference>
<dbReference type="InterPro" id="IPR011006">
    <property type="entry name" value="CheY-like_superfamily"/>
</dbReference>
<dbReference type="InterPro" id="IPR000673">
    <property type="entry name" value="Sig_transdc_resp-reg_Me-estase"/>
</dbReference>
<dbReference type="InterPro" id="IPR001789">
    <property type="entry name" value="Sig_transdc_resp-reg_receiver"/>
</dbReference>
<dbReference type="NCBIfam" id="NF001965">
    <property type="entry name" value="PRK00742.1"/>
    <property type="match status" value="1"/>
</dbReference>
<dbReference type="PANTHER" id="PTHR42872">
    <property type="entry name" value="PROTEIN-GLUTAMATE METHYLESTERASE/PROTEIN-GLUTAMINE GLUTAMINASE"/>
    <property type="match status" value="1"/>
</dbReference>
<dbReference type="PANTHER" id="PTHR42872:SF6">
    <property type="entry name" value="PROTEIN-GLUTAMATE METHYLESTERASE_PROTEIN-GLUTAMINE GLUTAMINASE"/>
    <property type="match status" value="1"/>
</dbReference>
<dbReference type="Pfam" id="PF01339">
    <property type="entry name" value="CheB_methylest"/>
    <property type="match status" value="1"/>
</dbReference>
<dbReference type="Pfam" id="PF00072">
    <property type="entry name" value="Response_reg"/>
    <property type="match status" value="1"/>
</dbReference>
<dbReference type="PIRSF" id="PIRSF000876">
    <property type="entry name" value="RR_chemtxs_CheB"/>
    <property type="match status" value="1"/>
</dbReference>
<dbReference type="SMART" id="SM00448">
    <property type="entry name" value="REC"/>
    <property type="match status" value="1"/>
</dbReference>
<dbReference type="SUPFAM" id="SSF52172">
    <property type="entry name" value="CheY-like"/>
    <property type="match status" value="1"/>
</dbReference>
<dbReference type="SUPFAM" id="SSF52738">
    <property type="entry name" value="Methylesterase CheB, C-terminal domain"/>
    <property type="match status" value="1"/>
</dbReference>
<dbReference type="PROSITE" id="PS50122">
    <property type="entry name" value="CHEB"/>
    <property type="match status" value="1"/>
</dbReference>
<dbReference type="PROSITE" id="PS50110">
    <property type="entry name" value="RESPONSE_REGULATORY"/>
    <property type="match status" value="1"/>
</dbReference>
<proteinExistence type="inferred from homology"/>
<name>CHEB_METMP</name>
<organism>
    <name type="scientific">Methanococcus maripaludis (strain DSM 14266 / JCM 13030 / NBRC 101832 / S2 / LL)</name>
    <dbReference type="NCBI Taxonomy" id="267377"/>
    <lineage>
        <taxon>Archaea</taxon>
        <taxon>Methanobacteriati</taxon>
        <taxon>Methanobacteriota</taxon>
        <taxon>Methanomada group</taxon>
        <taxon>Methanococci</taxon>
        <taxon>Methanococcales</taxon>
        <taxon>Methanococcaceae</taxon>
        <taxon>Methanococcus</taxon>
    </lineage>
</organism>
<feature type="chain" id="PRO_0000158055" description="Protein-glutamate methylesterase/protein-glutamine glutaminase">
    <location>
        <begin position="1"/>
        <end position="365"/>
    </location>
</feature>
<feature type="domain" description="Response regulatory" evidence="1">
    <location>
        <begin position="5"/>
        <end position="122"/>
    </location>
</feature>
<feature type="domain" description="CheB-type methylesterase" evidence="1">
    <location>
        <begin position="177"/>
        <end position="363"/>
    </location>
</feature>
<feature type="region of interest" description="Disordered" evidence="2">
    <location>
        <begin position="146"/>
        <end position="167"/>
    </location>
</feature>
<feature type="compositionally biased region" description="Basic and acidic residues" evidence="2">
    <location>
        <begin position="146"/>
        <end position="155"/>
    </location>
</feature>
<feature type="compositionally biased region" description="Polar residues" evidence="2">
    <location>
        <begin position="156"/>
        <end position="167"/>
    </location>
</feature>
<feature type="active site" evidence="1">
    <location>
        <position position="182"/>
    </location>
</feature>
<feature type="active site" evidence="1">
    <location>
        <position position="208"/>
    </location>
</feature>
<feature type="active site" evidence="1">
    <location>
        <position position="305"/>
    </location>
</feature>
<feature type="modified residue" description="4-aspartylphosphate" evidence="1">
    <location>
        <position position="56"/>
    </location>
</feature>
<evidence type="ECO:0000255" key="1">
    <source>
        <dbReference type="HAMAP-Rule" id="MF_00099"/>
    </source>
</evidence>
<evidence type="ECO:0000256" key="2">
    <source>
        <dbReference type="SAM" id="MobiDB-lite"/>
    </source>
</evidence>
<sequence length="365" mass="39791">MSKIKVLIVDDSAFMRKVLEDILKSDDEIEVVATAKDGKEAFELVKKLEPNVITMDVEMPIMNGIDATKQIMAYKPTPILMLSAVTKQGSEATLKALDNGAVDFIEKPSGSVSLDIRKIGEKIIKQVKDASKSKVRIKSSRILENIKKEKQDESSTPKPQVEKTSGLSPEKLNDTAILIGSSTGGPPVVSSIISNIPKNTPPIFIVQHMPKGFTRVFAERMNNNSAITVKEAEHGEIVKPDHAYVAPGDSQMVLQKRGGNVYIIIDENMPKIHGTKPTVDVTAEYVTKYYGKNTIGVLLTGIGRDGANGLKMVKNKGGYTIAQNQDTCVIYGMPKTAIEMNVVDKVMDPIDIPLEIIKFAKKIGG</sequence>
<protein>
    <recommendedName>
        <fullName evidence="1">Protein-glutamate methylesterase/protein-glutamine glutaminase</fullName>
        <ecNumber evidence="1">3.1.1.61</ecNumber>
        <ecNumber evidence="1">3.5.1.44</ecNumber>
    </recommendedName>
</protein>